<evidence type="ECO:0000255" key="1">
    <source>
        <dbReference type="HAMAP-Rule" id="MF_01142"/>
    </source>
</evidence>
<comment type="function">
    <text evidence="1">Inhibits the expression or activity of extracellular murein hydrolases by interacting, possibly with LrgA, with the holin-like protein CidA. The LrgAB and CidA proteins may affect the proton motive force of the membrane. May be involved in programmed cell death (PCD), possibly triggering PCD in response to antibiotics and environmental stresses.</text>
</comment>
<comment type="subcellular location">
    <subcellularLocation>
        <location evidence="1">Cell membrane</location>
        <topology evidence="1">Multi-pass membrane protein</topology>
    </subcellularLocation>
</comment>
<comment type="similarity">
    <text evidence="1">Belongs to the CidB/LrgB family. LrgB subfamily.</text>
</comment>
<name>LRGB_BACHK</name>
<organism>
    <name type="scientific">Bacillus thuringiensis subsp. konkukian (strain 97-27)</name>
    <dbReference type="NCBI Taxonomy" id="281309"/>
    <lineage>
        <taxon>Bacteria</taxon>
        <taxon>Bacillati</taxon>
        <taxon>Bacillota</taxon>
        <taxon>Bacilli</taxon>
        <taxon>Bacillales</taxon>
        <taxon>Bacillaceae</taxon>
        <taxon>Bacillus</taxon>
        <taxon>Bacillus cereus group</taxon>
    </lineage>
</organism>
<reference key="1">
    <citation type="journal article" date="2006" name="J. Bacteriol.">
        <title>Pathogenomic sequence analysis of Bacillus cereus and Bacillus thuringiensis isolates closely related to Bacillus anthracis.</title>
        <authorList>
            <person name="Han C.S."/>
            <person name="Xie G."/>
            <person name="Challacombe J.F."/>
            <person name="Altherr M.R."/>
            <person name="Bhotika S.S."/>
            <person name="Bruce D."/>
            <person name="Campbell C.S."/>
            <person name="Campbell M.L."/>
            <person name="Chen J."/>
            <person name="Chertkov O."/>
            <person name="Cleland C."/>
            <person name="Dimitrijevic M."/>
            <person name="Doggett N.A."/>
            <person name="Fawcett J.J."/>
            <person name="Glavina T."/>
            <person name="Goodwin L.A."/>
            <person name="Hill K.K."/>
            <person name="Hitchcock P."/>
            <person name="Jackson P.J."/>
            <person name="Keim P."/>
            <person name="Kewalramani A.R."/>
            <person name="Longmire J."/>
            <person name="Lucas S."/>
            <person name="Malfatti S."/>
            <person name="McMurry K."/>
            <person name="Meincke L.J."/>
            <person name="Misra M."/>
            <person name="Moseman B.L."/>
            <person name="Mundt M."/>
            <person name="Munk A.C."/>
            <person name="Okinaka R.T."/>
            <person name="Parson-Quintana B."/>
            <person name="Reilly L.P."/>
            <person name="Richardson P."/>
            <person name="Robinson D.L."/>
            <person name="Rubin E."/>
            <person name="Saunders E."/>
            <person name="Tapia R."/>
            <person name="Tesmer J.G."/>
            <person name="Thayer N."/>
            <person name="Thompson L.S."/>
            <person name="Tice H."/>
            <person name="Ticknor L.O."/>
            <person name="Wills P.L."/>
            <person name="Brettin T.S."/>
            <person name="Gilna P."/>
        </authorList>
    </citation>
    <scope>NUCLEOTIDE SEQUENCE [LARGE SCALE GENOMIC DNA]</scope>
    <source>
        <strain>97-27</strain>
    </source>
</reference>
<dbReference type="EMBL" id="AE017355">
    <property type="protein sequence ID" value="AAT63438.1"/>
    <property type="molecule type" value="Genomic_DNA"/>
</dbReference>
<dbReference type="RefSeq" id="WP_000168869.1">
    <property type="nucleotide sequence ID" value="NC_005957.1"/>
</dbReference>
<dbReference type="RefSeq" id="YP_039429.1">
    <property type="nucleotide sequence ID" value="NC_005957.1"/>
</dbReference>
<dbReference type="GeneID" id="93005687"/>
<dbReference type="KEGG" id="btk:BT9727_5120"/>
<dbReference type="PATRIC" id="fig|281309.8.peg.5445"/>
<dbReference type="HOGENOM" id="CLU_082099_1_0_9"/>
<dbReference type="Proteomes" id="UP000001301">
    <property type="component" value="Chromosome"/>
</dbReference>
<dbReference type="GO" id="GO:0005886">
    <property type="term" value="C:plasma membrane"/>
    <property type="evidence" value="ECO:0007669"/>
    <property type="project" value="UniProtKB-SubCell"/>
</dbReference>
<dbReference type="GO" id="GO:0019835">
    <property type="term" value="P:cytolysis"/>
    <property type="evidence" value="ECO:0007669"/>
    <property type="project" value="UniProtKB-UniRule"/>
</dbReference>
<dbReference type="GO" id="GO:0031640">
    <property type="term" value="P:killing of cells of another organism"/>
    <property type="evidence" value="ECO:0007669"/>
    <property type="project" value="UniProtKB-KW"/>
</dbReference>
<dbReference type="GO" id="GO:0012501">
    <property type="term" value="P:programmed cell death"/>
    <property type="evidence" value="ECO:0007669"/>
    <property type="project" value="UniProtKB-UniRule"/>
</dbReference>
<dbReference type="HAMAP" id="MF_01142">
    <property type="entry name" value="LrgB"/>
    <property type="match status" value="1"/>
</dbReference>
<dbReference type="InterPro" id="IPR024891">
    <property type="entry name" value="Antiholin-like_LrgB"/>
</dbReference>
<dbReference type="InterPro" id="IPR007300">
    <property type="entry name" value="CidB/LrgB"/>
</dbReference>
<dbReference type="NCBIfam" id="NF003291">
    <property type="entry name" value="PRK04288.1"/>
    <property type="match status" value="1"/>
</dbReference>
<dbReference type="PANTHER" id="PTHR30249:SF0">
    <property type="entry name" value="PLASTIDAL GLYCOLATE_GLYCERATE TRANSLOCATOR 1, CHLOROPLASTIC"/>
    <property type="match status" value="1"/>
</dbReference>
<dbReference type="PANTHER" id="PTHR30249">
    <property type="entry name" value="PUTATIVE SEROTONIN TRANSPORTER"/>
    <property type="match status" value="1"/>
</dbReference>
<dbReference type="Pfam" id="PF04172">
    <property type="entry name" value="LrgB"/>
    <property type="match status" value="1"/>
</dbReference>
<gene>
    <name evidence="1" type="primary">lrgB</name>
    <name type="ordered locus">BT9727_5120</name>
</gene>
<feature type="chain" id="PRO_1000065441" description="Antiholin-like protein LrgB">
    <location>
        <begin position="1"/>
        <end position="230"/>
    </location>
</feature>
<feature type="transmembrane region" description="Helical" evidence="1">
    <location>
        <begin position="5"/>
        <end position="25"/>
    </location>
</feature>
<feature type="transmembrane region" description="Helical" evidence="1">
    <location>
        <begin position="30"/>
        <end position="50"/>
    </location>
</feature>
<feature type="transmembrane region" description="Helical" evidence="1">
    <location>
        <begin position="61"/>
        <end position="81"/>
    </location>
</feature>
<feature type="transmembrane region" description="Helical" evidence="1">
    <location>
        <begin position="92"/>
        <end position="112"/>
    </location>
</feature>
<feature type="transmembrane region" description="Helical" evidence="1">
    <location>
        <begin position="149"/>
        <end position="169"/>
    </location>
</feature>
<feature type="transmembrane region" description="Helical" evidence="1">
    <location>
        <begin position="177"/>
        <end position="197"/>
    </location>
</feature>
<feature type="transmembrane region" description="Helical" evidence="1">
    <location>
        <begin position="209"/>
        <end position="229"/>
    </location>
</feature>
<protein>
    <recommendedName>
        <fullName evidence="1">Antiholin-like protein LrgB</fullName>
    </recommendedName>
</protein>
<sequence length="230" mass="24349">MASTMTPYFGIVVSLIAYGIGTLLFKHSKGFFLFTPLFVAMVLGIVFLKVGNFTFEEYNTGGKMISFFLEPATIAFAIPLYKQVDKLKKYWWQILSAIVVGSICSVIVVFIVAKAIGLDTAVMNSMLPQAATTAIALPISESIGGIPAITSFAVIFNAVIVYALGALFLKTFRVKHPIAKGLALGTAGHALGVAVGIEMGEVEAAMASIAVTVVGVVTVVVIPMFMPFIG</sequence>
<keyword id="KW-1003">Cell membrane</keyword>
<keyword id="KW-0204">Cytolysis</keyword>
<keyword id="KW-0472">Membrane</keyword>
<keyword id="KW-0812">Transmembrane</keyword>
<keyword id="KW-1133">Transmembrane helix</keyword>
<accession>Q6HAJ7</accession>
<proteinExistence type="inferred from homology"/>